<gene>
    <name evidence="2" type="primary">ddl</name>
    <name type="ordered locus">CGSHiGG_09360</name>
</gene>
<reference key="1">
    <citation type="journal article" date="2007" name="Genome Biol.">
        <title>Characterization and modeling of the Haemophilus influenzae core and supragenomes based on the complete genomic sequences of Rd and 12 clinical nontypeable strains.</title>
        <authorList>
            <person name="Hogg J.S."/>
            <person name="Hu F.Z."/>
            <person name="Janto B."/>
            <person name="Boissy R."/>
            <person name="Hayes J."/>
            <person name="Keefe R."/>
            <person name="Post J.C."/>
            <person name="Ehrlich G.D."/>
        </authorList>
    </citation>
    <scope>NUCLEOTIDE SEQUENCE [LARGE SCALE GENOMIC DNA]</scope>
    <source>
        <strain>PittGG</strain>
    </source>
</reference>
<organism>
    <name type="scientific">Haemophilus influenzae (strain PittGG)</name>
    <dbReference type="NCBI Taxonomy" id="374931"/>
    <lineage>
        <taxon>Bacteria</taxon>
        <taxon>Pseudomonadati</taxon>
        <taxon>Pseudomonadota</taxon>
        <taxon>Gammaproteobacteria</taxon>
        <taxon>Pasteurellales</taxon>
        <taxon>Pasteurellaceae</taxon>
        <taxon>Haemophilus</taxon>
    </lineage>
</organism>
<name>DDL_HAEIG</name>
<feature type="chain" id="PRO_1000030452" description="D-alanine--D-alanine ligase">
    <location>
        <begin position="1"/>
        <end position="306"/>
    </location>
</feature>
<feature type="domain" description="ATP-grasp" evidence="2">
    <location>
        <begin position="104"/>
        <end position="303"/>
    </location>
</feature>
<feature type="binding site" evidence="2">
    <location>
        <begin position="134"/>
        <end position="189"/>
    </location>
    <ligand>
        <name>ATP</name>
        <dbReference type="ChEBI" id="CHEBI:30616"/>
    </ligand>
</feature>
<feature type="binding site" evidence="2">
    <location>
        <position position="257"/>
    </location>
    <ligand>
        <name>Mg(2+)</name>
        <dbReference type="ChEBI" id="CHEBI:18420"/>
        <label>1</label>
    </ligand>
</feature>
<feature type="binding site" evidence="2">
    <location>
        <position position="270"/>
    </location>
    <ligand>
        <name>Mg(2+)</name>
        <dbReference type="ChEBI" id="CHEBI:18420"/>
        <label>1</label>
    </ligand>
</feature>
<feature type="binding site" evidence="2">
    <location>
        <position position="270"/>
    </location>
    <ligand>
        <name>Mg(2+)</name>
        <dbReference type="ChEBI" id="CHEBI:18420"/>
        <label>2</label>
    </ligand>
</feature>
<feature type="binding site" evidence="2">
    <location>
        <position position="272"/>
    </location>
    <ligand>
        <name>Mg(2+)</name>
        <dbReference type="ChEBI" id="CHEBI:18420"/>
        <label>2</label>
    </ligand>
</feature>
<dbReference type="EC" id="6.3.2.4" evidence="2"/>
<dbReference type="EMBL" id="CP000672">
    <property type="protein sequence ID" value="ABR00670.1"/>
    <property type="molecule type" value="Genomic_DNA"/>
</dbReference>
<dbReference type="SMR" id="A5UIR4"/>
<dbReference type="KEGG" id="hiq:CGSHiGG_09360"/>
<dbReference type="HOGENOM" id="CLU_039268_1_2_6"/>
<dbReference type="UniPathway" id="UPA00219"/>
<dbReference type="Proteomes" id="UP000001990">
    <property type="component" value="Chromosome"/>
</dbReference>
<dbReference type="GO" id="GO:0005829">
    <property type="term" value="C:cytosol"/>
    <property type="evidence" value="ECO:0007669"/>
    <property type="project" value="TreeGrafter"/>
</dbReference>
<dbReference type="GO" id="GO:0005524">
    <property type="term" value="F:ATP binding"/>
    <property type="evidence" value="ECO:0007669"/>
    <property type="project" value="UniProtKB-KW"/>
</dbReference>
<dbReference type="GO" id="GO:0008716">
    <property type="term" value="F:D-alanine-D-alanine ligase activity"/>
    <property type="evidence" value="ECO:0007669"/>
    <property type="project" value="UniProtKB-UniRule"/>
</dbReference>
<dbReference type="GO" id="GO:0046872">
    <property type="term" value="F:metal ion binding"/>
    <property type="evidence" value="ECO:0007669"/>
    <property type="project" value="UniProtKB-KW"/>
</dbReference>
<dbReference type="GO" id="GO:0071555">
    <property type="term" value="P:cell wall organization"/>
    <property type="evidence" value="ECO:0007669"/>
    <property type="project" value="UniProtKB-KW"/>
</dbReference>
<dbReference type="GO" id="GO:0009252">
    <property type="term" value="P:peptidoglycan biosynthetic process"/>
    <property type="evidence" value="ECO:0007669"/>
    <property type="project" value="UniProtKB-UniRule"/>
</dbReference>
<dbReference type="GO" id="GO:0008360">
    <property type="term" value="P:regulation of cell shape"/>
    <property type="evidence" value="ECO:0007669"/>
    <property type="project" value="UniProtKB-KW"/>
</dbReference>
<dbReference type="FunFam" id="3.30.1490.20:FF:000007">
    <property type="entry name" value="D-alanine--D-alanine ligase"/>
    <property type="match status" value="1"/>
</dbReference>
<dbReference type="FunFam" id="3.30.470.20:FF:000008">
    <property type="entry name" value="D-alanine--D-alanine ligase"/>
    <property type="match status" value="1"/>
</dbReference>
<dbReference type="FunFam" id="3.40.50.20:FF:000013">
    <property type="entry name" value="D-alanine--D-alanine ligase"/>
    <property type="match status" value="1"/>
</dbReference>
<dbReference type="Gene3D" id="3.40.50.20">
    <property type="match status" value="1"/>
</dbReference>
<dbReference type="Gene3D" id="3.30.1490.20">
    <property type="entry name" value="ATP-grasp fold, A domain"/>
    <property type="match status" value="1"/>
</dbReference>
<dbReference type="Gene3D" id="3.30.470.20">
    <property type="entry name" value="ATP-grasp fold, B domain"/>
    <property type="match status" value="1"/>
</dbReference>
<dbReference type="HAMAP" id="MF_00047">
    <property type="entry name" value="Dala_Dala_lig"/>
    <property type="match status" value="1"/>
</dbReference>
<dbReference type="InterPro" id="IPR011761">
    <property type="entry name" value="ATP-grasp"/>
</dbReference>
<dbReference type="InterPro" id="IPR013815">
    <property type="entry name" value="ATP_grasp_subdomain_1"/>
</dbReference>
<dbReference type="InterPro" id="IPR000291">
    <property type="entry name" value="D-Ala_lig_Van_CS"/>
</dbReference>
<dbReference type="InterPro" id="IPR005905">
    <property type="entry name" value="D_ala_D_ala"/>
</dbReference>
<dbReference type="InterPro" id="IPR011095">
    <property type="entry name" value="Dala_Dala_lig_C"/>
</dbReference>
<dbReference type="InterPro" id="IPR011127">
    <property type="entry name" value="Dala_Dala_lig_N"/>
</dbReference>
<dbReference type="InterPro" id="IPR016185">
    <property type="entry name" value="PreATP-grasp_dom_sf"/>
</dbReference>
<dbReference type="NCBIfam" id="TIGR01205">
    <property type="entry name" value="D_ala_D_alaTIGR"/>
    <property type="match status" value="1"/>
</dbReference>
<dbReference type="NCBIfam" id="NF002378">
    <property type="entry name" value="PRK01372.1"/>
    <property type="match status" value="1"/>
</dbReference>
<dbReference type="PANTHER" id="PTHR23132">
    <property type="entry name" value="D-ALANINE--D-ALANINE LIGASE"/>
    <property type="match status" value="1"/>
</dbReference>
<dbReference type="PANTHER" id="PTHR23132:SF23">
    <property type="entry name" value="D-ALANINE--D-ALANINE LIGASE B"/>
    <property type="match status" value="1"/>
</dbReference>
<dbReference type="Pfam" id="PF07478">
    <property type="entry name" value="Dala_Dala_lig_C"/>
    <property type="match status" value="1"/>
</dbReference>
<dbReference type="Pfam" id="PF01820">
    <property type="entry name" value="Dala_Dala_lig_N"/>
    <property type="match status" value="2"/>
</dbReference>
<dbReference type="PIRSF" id="PIRSF039102">
    <property type="entry name" value="Ddl/VanB"/>
    <property type="match status" value="1"/>
</dbReference>
<dbReference type="SUPFAM" id="SSF56059">
    <property type="entry name" value="Glutathione synthetase ATP-binding domain-like"/>
    <property type="match status" value="1"/>
</dbReference>
<dbReference type="SUPFAM" id="SSF52440">
    <property type="entry name" value="PreATP-grasp domain"/>
    <property type="match status" value="1"/>
</dbReference>
<dbReference type="PROSITE" id="PS50975">
    <property type="entry name" value="ATP_GRASP"/>
    <property type="match status" value="1"/>
</dbReference>
<dbReference type="PROSITE" id="PS00843">
    <property type="entry name" value="DALA_DALA_LIGASE_1"/>
    <property type="match status" value="1"/>
</dbReference>
<dbReference type="PROSITE" id="PS00844">
    <property type="entry name" value="DALA_DALA_LIGASE_2"/>
    <property type="match status" value="1"/>
</dbReference>
<evidence type="ECO:0000250" key="1"/>
<evidence type="ECO:0000255" key="2">
    <source>
        <dbReference type="HAMAP-Rule" id="MF_00047"/>
    </source>
</evidence>
<proteinExistence type="inferred from homology"/>
<accession>A5UIR4</accession>
<protein>
    <recommendedName>
        <fullName evidence="2">D-alanine--D-alanine ligase</fullName>
        <ecNumber evidence="2">6.3.2.4</ecNumber>
    </recommendedName>
    <alternativeName>
        <fullName evidence="2">D-Ala-D-Ala ligase</fullName>
    </alternativeName>
    <alternativeName>
        <fullName evidence="2">D-alanylalanine synthetase</fullName>
    </alternativeName>
</protein>
<keyword id="KW-0067">ATP-binding</keyword>
<keyword id="KW-0133">Cell shape</keyword>
<keyword id="KW-0961">Cell wall biogenesis/degradation</keyword>
<keyword id="KW-0963">Cytoplasm</keyword>
<keyword id="KW-0436">Ligase</keyword>
<keyword id="KW-0460">Magnesium</keyword>
<keyword id="KW-0464">Manganese</keyword>
<keyword id="KW-0479">Metal-binding</keyword>
<keyword id="KW-0547">Nucleotide-binding</keyword>
<keyword id="KW-0573">Peptidoglycan synthesis</keyword>
<comment type="function">
    <text evidence="2">Cell wall formation.</text>
</comment>
<comment type="catalytic activity">
    <reaction evidence="2">
        <text>2 D-alanine + ATP = D-alanyl-D-alanine + ADP + phosphate + H(+)</text>
        <dbReference type="Rhea" id="RHEA:11224"/>
        <dbReference type="ChEBI" id="CHEBI:15378"/>
        <dbReference type="ChEBI" id="CHEBI:30616"/>
        <dbReference type="ChEBI" id="CHEBI:43474"/>
        <dbReference type="ChEBI" id="CHEBI:57416"/>
        <dbReference type="ChEBI" id="CHEBI:57822"/>
        <dbReference type="ChEBI" id="CHEBI:456216"/>
        <dbReference type="EC" id="6.3.2.4"/>
    </reaction>
</comment>
<comment type="cofactor">
    <cofactor evidence="1">
        <name>Mg(2+)</name>
        <dbReference type="ChEBI" id="CHEBI:18420"/>
    </cofactor>
    <cofactor evidence="1">
        <name>Mn(2+)</name>
        <dbReference type="ChEBI" id="CHEBI:29035"/>
    </cofactor>
    <text evidence="1">Binds 2 magnesium or manganese ions per subunit.</text>
</comment>
<comment type="pathway">
    <text evidence="2">Cell wall biogenesis; peptidoglycan biosynthesis.</text>
</comment>
<comment type="subcellular location">
    <subcellularLocation>
        <location evidence="2">Cytoplasm</location>
    </subcellularLocation>
</comment>
<comment type="similarity">
    <text evidence="2">Belongs to the D-alanine--D-alanine ligase family.</text>
</comment>
<sequence>MNLKQEKIAVLLGGTSAEREVSFNSGRAVLEALLKQGYNAHPIDPKEYNVANLKKDGFNRAFNILHGRGGEDGTMQGLLEQIGLPYTGCGVMASALTMDKMRTKMLWKAFGLPVADMKVVTRETFSELDPQAVVAKLGLPLMVKPSLEGSSVGLTKVKAVEELKSAVEYALKFDNTILIEEWLAGDELTVPVLDNQVLPAIRIVPEGEFYDYEAKYISDNTQYFCPAGLTPEREQELAILVKRAYDAVGCRGWSRIDVMCDAKGNFRLVEVNTNPGMTSHSLFPKSAATVGISFEQLVVKILELSL</sequence>